<proteinExistence type="inferred from homology"/>
<protein>
    <recommendedName>
        <fullName evidence="1">UPF0178 protein BB1267</fullName>
    </recommendedName>
</protein>
<dbReference type="EMBL" id="BX640440">
    <property type="protein sequence ID" value="CAE31765.1"/>
    <property type="molecule type" value="Genomic_DNA"/>
</dbReference>
<dbReference type="RefSeq" id="WP_010926112.1">
    <property type="nucleotide sequence ID" value="NC_002927.3"/>
</dbReference>
<dbReference type="KEGG" id="bbr:BB1267"/>
<dbReference type="eggNOG" id="COG1671">
    <property type="taxonomic scope" value="Bacteria"/>
</dbReference>
<dbReference type="HOGENOM" id="CLU_106619_2_1_4"/>
<dbReference type="Proteomes" id="UP000001027">
    <property type="component" value="Chromosome"/>
</dbReference>
<dbReference type="CDD" id="cd18720">
    <property type="entry name" value="PIN_YqxD-like"/>
    <property type="match status" value="1"/>
</dbReference>
<dbReference type="HAMAP" id="MF_00489">
    <property type="entry name" value="UPF0178"/>
    <property type="match status" value="1"/>
</dbReference>
<dbReference type="InterPro" id="IPR003791">
    <property type="entry name" value="UPF0178"/>
</dbReference>
<dbReference type="NCBIfam" id="NF001095">
    <property type="entry name" value="PRK00124.1"/>
    <property type="match status" value="1"/>
</dbReference>
<dbReference type="PANTHER" id="PTHR35146">
    <property type="entry name" value="UPF0178 PROTEIN YAII"/>
    <property type="match status" value="1"/>
</dbReference>
<dbReference type="PANTHER" id="PTHR35146:SF1">
    <property type="entry name" value="UPF0178 PROTEIN YAII"/>
    <property type="match status" value="1"/>
</dbReference>
<dbReference type="Pfam" id="PF02639">
    <property type="entry name" value="DUF188"/>
    <property type="match status" value="1"/>
</dbReference>
<name>Y1267_BORBR</name>
<accession>Q7WMX3</accession>
<reference key="1">
    <citation type="journal article" date="2003" name="Nat. Genet.">
        <title>Comparative analysis of the genome sequences of Bordetella pertussis, Bordetella parapertussis and Bordetella bronchiseptica.</title>
        <authorList>
            <person name="Parkhill J."/>
            <person name="Sebaihia M."/>
            <person name="Preston A."/>
            <person name="Murphy L.D."/>
            <person name="Thomson N.R."/>
            <person name="Harris D.E."/>
            <person name="Holden M.T.G."/>
            <person name="Churcher C.M."/>
            <person name="Bentley S.D."/>
            <person name="Mungall K.L."/>
            <person name="Cerdeno-Tarraga A.-M."/>
            <person name="Temple L."/>
            <person name="James K.D."/>
            <person name="Harris B."/>
            <person name="Quail M.A."/>
            <person name="Achtman M."/>
            <person name="Atkin R."/>
            <person name="Baker S."/>
            <person name="Basham D."/>
            <person name="Bason N."/>
            <person name="Cherevach I."/>
            <person name="Chillingworth T."/>
            <person name="Collins M."/>
            <person name="Cronin A."/>
            <person name="Davis P."/>
            <person name="Doggett J."/>
            <person name="Feltwell T."/>
            <person name="Goble A."/>
            <person name="Hamlin N."/>
            <person name="Hauser H."/>
            <person name="Holroyd S."/>
            <person name="Jagels K."/>
            <person name="Leather S."/>
            <person name="Moule S."/>
            <person name="Norberczak H."/>
            <person name="O'Neil S."/>
            <person name="Ormond D."/>
            <person name="Price C."/>
            <person name="Rabbinowitsch E."/>
            <person name="Rutter S."/>
            <person name="Sanders M."/>
            <person name="Saunders D."/>
            <person name="Seeger K."/>
            <person name="Sharp S."/>
            <person name="Simmonds M."/>
            <person name="Skelton J."/>
            <person name="Squares R."/>
            <person name="Squares S."/>
            <person name="Stevens K."/>
            <person name="Unwin L."/>
            <person name="Whitehead S."/>
            <person name="Barrell B.G."/>
            <person name="Maskell D.J."/>
        </authorList>
    </citation>
    <scope>NUCLEOTIDE SEQUENCE [LARGE SCALE GENOMIC DNA]</scope>
    <source>
        <strain>ATCC BAA-588 / NCTC 13252 / RB50</strain>
    </source>
</reference>
<feature type="chain" id="PRO_0000175964" description="UPF0178 protein BB1267">
    <location>
        <begin position="1"/>
        <end position="160"/>
    </location>
</feature>
<sequence>MNIWVDADACPAEVKDILWRAAQRWQVPVTLVANQLLRVPASPWMRAVQVPRGFDVADAHIVASAVPGDLVITADIPLAAEVVGKGVAAMSWRGEVFDAGSIGERLTMRDMMEELRAGGVDIGGPAAFGQADRRAFANALDAAMQRRARTRGAGGKPGVV</sequence>
<organism>
    <name type="scientific">Bordetella bronchiseptica (strain ATCC BAA-588 / NCTC 13252 / RB50)</name>
    <name type="common">Alcaligenes bronchisepticus</name>
    <dbReference type="NCBI Taxonomy" id="257310"/>
    <lineage>
        <taxon>Bacteria</taxon>
        <taxon>Pseudomonadati</taxon>
        <taxon>Pseudomonadota</taxon>
        <taxon>Betaproteobacteria</taxon>
        <taxon>Burkholderiales</taxon>
        <taxon>Alcaligenaceae</taxon>
        <taxon>Bordetella</taxon>
    </lineage>
</organism>
<gene>
    <name type="ordered locus">BB1267</name>
</gene>
<comment type="similarity">
    <text evidence="1">Belongs to the UPF0178 family.</text>
</comment>
<evidence type="ECO:0000255" key="1">
    <source>
        <dbReference type="HAMAP-Rule" id="MF_00489"/>
    </source>
</evidence>